<proteinExistence type="inferred from homology"/>
<keyword id="KW-1185">Reference proteome</keyword>
<keyword id="KW-0687">Ribonucleoprotein</keyword>
<keyword id="KW-0689">Ribosomal protein</keyword>
<keyword id="KW-0694">RNA-binding</keyword>
<keyword id="KW-0699">rRNA-binding</keyword>
<keyword id="KW-0820">tRNA-binding</keyword>
<evidence type="ECO:0000255" key="1">
    <source>
        <dbReference type="HAMAP-Rule" id="MF_01315"/>
    </source>
</evidence>
<evidence type="ECO:0000256" key="2">
    <source>
        <dbReference type="SAM" id="MobiDB-lite"/>
    </source>
</evidence>
<evidence type="ECO:0000305" key="3"/>
<reference key="1">
    <citation type="submission" date="2007-10" db="EMBL/GenBank/DDBJ databases">
        <title>Complete sequence of Shewanella pealeana ATCC 700345.</title>
        <authorList>
            <consortium name="US DOE Joint Genome Institute"/>
            <person name="Copeland A."/>
            <person name="Lucas S."/>
            <person name="Lapidus A."/>
            <person name="Barry K."/>
            <person name="Glavina del Rio T."/>
            <person name="Dalin E."/>
            <person name="Tice H."/>
            <person name="Pitluck S."/>
            <person name="Chertkov O."/>
            <person name="Brettin T."/>
            <person name="Bruce D."/>
            <person name="Detter J.C."/>
            <person name="Han C."/>
            <person name="Schmutz J."/>
            <person name="Larimer F."/>
            <person name="Land M."/>
            <person name="Hauser L."/>
            <person name="Kyrpides N."/>
            <person name="Kim E."/>
            <person name="Zhao J.-S.Z."/>
            <person name="Manno D."/>
            <person name="Hawari J."/>
            <person name="Richardson P."/>
        </authorList>
    </citation>
    <scope>NUCLEOTIDE SEQUENCE [LARGE SCALE GENOMIC DNA]</scope>
    <source>
        <strain>ATCC 700345 / ANG-SQ1</strain>
    </source>
</reference>
<accession>A8GYZ7</accession>
<sequence>MARIAGINIPDQKHTVIALTAIYGIGRTRAQAICAATSIAEDAKIKELSEAQIDTLREEVANYIVEGDLRREVSMNIKRLMDLGCYRGLRHRRSLPLRGQRTKTNARTRKGPRKPIRK</sequence>
<organism>
    <name type="scientific">Shewanella pealeana (strain ATCC 700345 / ANG-SQ1)</name>
    <dbReference type="NCBI Taxonomy" id="398579"/>
    <lineage>
        <taxon>Bacteria</taxon>
        <taxon>Pseudomonadati</taxon>
        <taxon>Pseudomonadota</taxon>
        <taxon>Gammaproteobacteria</taxon>
        <taxon>Alteromonadales</taxon>
        <taxon>Shewanellaceae</taxon>
        <taxon>Shewanella</taxon>
    </lineage>
</organism>
<protein>
    <recommendedName>
        <fullName evidence="1">Small ribosomal subunit protein uS13</fullName>
    </recommendedName>
    <alternativeName>
        <fullName evidence="3">30S ribosomal protein S13</fullName>
    </alternativeName>
</protein>
<feature type="chain" id="PRO_1000086260" description="Small ribosomal subunit protein uS13">
    <location>
        <begin position="1"/>
        <end position="118"/>
    </location>
</feature>
<feature type="region of interest" description="Disordered" evidence="2">
    <location>
        <begin position="94"/>
        <end position="118"/>
    </location>
</feature>
<name>RS13_SHEPA</name>
<gene>
    <name evidence="1" type="primary">rpsM</name>
    <name type="ordered locus">Spea_0206</name>
</gene>
<dbReference type="EMBL" id="CP000851">
    <property type="protein sequence ID" value="ABV85534.1"/>
    <property type="molecule type" value="Genomic_DNA"/>
</dbReference>
<dbReference type="RefSeq" id="WP_012153475.1">
    <property type="nucleotide sequence ID" value="NC_009901.1"/>
</dbReference>
<dbReference type="SMR" id="A8GYZ7"/>
<dbReference type="STRING" id="398579.Spea_0206"/>
<dbReference type="KEGG" id="spl:Spea_0206"/>
<dbReference type="eggNOG" id="COG0099">
    <property type="taxonomic scope" value="Bacteria"/>
</dbReference>
<dbReference type="HOGENOM" id="CLU_103849_1_2_6"/>
<dbReference type="OrthoDB" id="9803610at2"/>
<dbReference type="Proteomes" id="UP000002608">
    <property type="component" value="Chromosome"/>
</dbReference>
<dbReference type="GO" id="GO:0005829">
    <property type="term" value="C:cytosol"/>
    <property type="evidence" value="ECO:0007669"/>
    <property type="project" value="TreeGrafter"/>
</dbReference>
<dbReference type="GO" id="GO:0015935">
    <property type="term" value="C:small ribosomal subunit"/>
    <property type="evidence" value="ECO:0007669"/>
    <property type="project" value="TreeGrafter"/>
</dbReference>
<dbReference type="GO" id="GO:0019843">
    <property type="term" value="F:rRNA binding"/>
    <property type="evidence" value="ECO:0007669"/>
    <property type="project" value="UniProtKB-UniRule"/>
</dbReference>
<dbReference type="GO" id="GO:0003735">
    <property type="term" value="F:structural constituent of ribosome"/>
    <property type="evidence" value="ECO:0007669"/>
    <property type="project" value="InterPro"/>
</dbReference>
<dbReference type="GO" id="GO:0000049">
    <property type="term" value="F:tRNA binding"/>
    <property type="evidence" value="ECO:0007669"/>
    <property type="project" value="UniProtKB-UniRule"/>
</dbReference>
<dbReference type="GO" id="GO:0006412">
    <property type="term" value="P:translation"/>
    <property type="evidence" value="ECO:0007669"/>
    <property type="project" value="UniProtKB-UniRule"/>
</dbReference>
<dbReference type="FunFam" id="1.10.8.50:FF:000001">
    <property type="entry name" value="30S ribosomal protein S13"/>
    <property type="match status" value="1"/>
</dbReference>
<dbReference type="FunFam" id="4.10.910.10:FF:000001">
    <property type="entry name" value="30S ribosomal protein S13"/>
    <property type="match status" value="1"/>
</dbReference>
<dbReference type="Gene3D" id="1.10.8.50">
    <property type="match status" value="1"/>
</dbReference>
<dbReference type="Gene3D" id="4.10.910.10">
    <property type="entry name" value="30s ribosomal protein s13, domain 2"/>
    <property type="match status" value="1"/>
</dbReference>
<dbReference type="HAMAP" id="MF_01315">
    <property type="entry name" value="Ribosomal_uS13"/>
    <property type="match status" value="1"/>
</dbReference>
<dbReference type="InterPro" id="IPR027437">
    <property type="entry name" value="Rbsml_uS13_C"/>
</dbReference>
<dbReference type="InterPro" id="IPR001892">
    <property type="entry name" value="Ribosomal_uS13"/>
</dbReference>
<dbReference type="InterPro" id="IPR010979">
    <property type="entry name" value="Ribosomal_uS13-like_H2TH"/>
</dbReference>
<dbReference type="InterPro" id="IPR019980">
    <property type="entry name" value="Ribosomal_uS13_bac-type"/>
</dbReference>
<dbReference type="InterPro" id="IPR018269">
    <property type="entry name" value="Ribosomal_uS13_CS"/>
</dbReference>
<dbReference type="NCBIfam" id="TIGR03631">
    <property type="entry name" value="uS13_bact"/>
    <property type="match status" value="1"/>
</dbReference>
<dbReference type="PANTHER" id="PTHR10871">
    <property type="entry name" value="30S RIBOSOMAL PROTEIN S13/40S RIBOSOMAL PROTEIN S18"/>
    <property type="match status" value="1"/>
</dbReference>
<dbReference type="PANTHER" id="PTHR10871:SF1">
    <property type="entry name" value="SMALL RIBOSOMAL SUBUNIT PROTEIN US13M"/>
    <property type="match status" value="1"/>
</dbReference>
<dbReference type="Pfam" id="PF00416">
    <property type="entry name" value="Ribosomal_S13"/>
    <property type="match status" value="1"/>
</dbReference>
<dbReference type="PIRSF" id="PIRSF002134">
    <property type="entry name" value="Ribosomal_S13"/>
    <property type="match status" value="1"/>
</dbReference>
<dbReference type="SUPFAM" id="SSF46946">
    <property type="entry name" value="S13-like H2TH domain"/>
    <property type="match status" value="1"/>
</dbReference>
<dbReference type="PROSITE" id="PS00646">
    <property type="entry name" value="RIBOSOMAL_S13_1"/>
    <property type="match status" value="1"/>
</dbReference>
<dbReference type="PROSITE" id="PS50159">
    <property type="entry name" value="RIBOSOMAL_S13_2"/>
    <property type="match status" value="1"/>
</dbReference>
<comment type="function">
    <text evidence="1">Located at the top of the head of the 30S subunit, it contacts several helices of the 16S rRNA. In the 70S ribosome it contacts the 23S rRNA (bridge B1a) and protein L5 of the 50S subunit (bridge B1b), connecting the 2 subunits; these bridges are implicated in subunit movement. Contacts the tRNAs in the A and P-sites.</text>
</comment>
<comment type="subunit">
    <text evidence="1">Part of the 30S ribosomal subunit. Forms a loose heterodimer with protein S19. Forms two bridges to the 50S subunit in the 70S ribosome.</text>
</comment>
<comment type="similarity">
    <text evidence="1">Belongs to the universal ribosomal protein uS13 family.</text>
</comment>